<protein>
    <recommendedName>
        <fullName evidence="5">LEAF RUST 10 DISEASE-RESISTANCE LOCUS RECEPTOR-LIKE PROTEIN KINASE-like 2.1</fullName>
        <ecNumber>2.7.11.1</ecNumber>
    </recommendedName>
    <alternativeName>
        <fullName evidence="6">Probable receptor-like serine/threonine-protein kinase LRK10L-2.1</fullName>
    </alternativeName>
</protein>
<accession>Q9FF31</accession>
<comment type="catalytic activity">
    <reaction>
        <text>L-seryl-[protein] + ATP = O-phospho-L-seryl-[protein] + ADP + H(+)</text>
        <dbReference type="Rhea" id="RHEA:17989"/>
        <dbReference type="Rhea" id="RHEA-COMP:9863"/>
        <dbReference type="Rhea" id="RHEA-COMP:11604"/>
        <dbReference type="ChEBI" id="CHEBI:15378"/>
        <dbReference type="ChEBI" id="CHEBI:29999"/>
        <dbReference type="ChEBI" id="CHEBI:30616"/>
        <dbReference type="ChEBI" id="CHEBI:83421"/>
        <dbReference type="ChEBI" id="CHEBI:456216"/>
        <dbReference type="EC" id="2.7.11.1"/>
    </reaction>
</comment>
<comment type="catalytic activity">
    <reaction>
        <text>L-threonyl-[protein] + ATP = O-phospho-L-threonyl-[protein] + ADP + H(+)</text>
        <dbReference type="Rhea" id="RHEA:46608"/>
        <dbReference type="Rhea" id="RHEA-COMP:11060"/>
        <dbReference type="Rhea" id="RHEA-COMP:11605"/>
        <dbReference type="ChEBI" id="CHEBI:15378"/>
        <dbReference type="ChEBI" id="CHEBI:30013"/>
        <dbReference type="ChEBI" id="CHEBI:30616"/>
        <dbReference type="ChEBI" id="CHEBI:61977"/>
        <dbReference type="ChEBI" id="CHEBI:456216"/>
        <dbReference type="EC" id="2.7.11.1"/>
    </reaction>
</comment>
<comment type="subcellular location">
    <subcellularLocation>
        <location evidence="2">Membrane</location>
        <topology evidence="6">Single-pass type I membrane protein</topology>
    </subcellularLocation>
</comment>
<comment type="similarity">
    <text evidence="3">Belongs to the protein kinase superfamily. Ser/Thr protein kinase family.</text>
</comment>
<proteinExistence type="inferred from homology"/>
<dbReference type="EC" id="2.7.11.1"/>
<dbReference type="EMBL" id="AB005247">
    <property type="protein sequence ID" value="BAB11292.1"/>
    <property type="molecule type" value="Genomic_DNA"/>
</dbReference>
<dbReference type="EMBL" id="CP002688">
    <property type="protein sequence ID" value="AED94287.1"/>
    <property type="molecule type" value="Genomic_DNA"/>
</dbReference>
<dbReference type="RefSeq" id="NP_198642.1">
    <property type="nucleotide sequence ID" value="NM_123187.1"/>
</dbReference>
<dbReference type="SMR" id="Q9FF31"/>
<dbReference type="STRING" id="3702.Q9FF31"/>
<dbReference type="GlyCosmos" id="Q9FF31">
    <property type="glycosylation" value="5 sites, No reported glycans"/>
</dbReference>
<dbReference type="GlyGen" id="Q9FF31">
    <property type="glycosylation" value="5 sites"/>
</dbReference>
<dbReference type="PaxDb" id="3702-AT5G38260.1"/>
<dbReference type="EnsemblPlants" id="AT5G38260.1">
    <property type="protein sequence ID" value="AT5G38260.1"/>
    <property type="gene ID" value="AT5G38260"/>
</dbReference>
<dbReference type="GeneID" id="833808"/>
<dbReference type="Gramene" id="AT5G38260.1">
    <property type="protein sequence ID" value="AT5G38260.1"/>
    <property type="gene ID" value="AT5G38260"/>
</dbReference>
<dbReference type="KEGG" id="ath:AT5G38260"/>
<dbReference type="Araport" id="AT5G38260"/>
<dbReference type="TAIR" id="AT5G38260"/>
<dbReference type="eggNOG" id="KOG1187">
    <property type="taxonomic scope" value="Eukaryota"/>
</dbReference>
<dbReference type="HOGENOM" id="CLU_000288_115_3_1"/>
<dbReference type="InParanoid" id="Q9FF31"/>
<dbReference type="OMA" id="CKRAIVY"/>
<dbReference type="PhylomeDB" id="Q9FF31"/>
<dbReference type="PRO" id="PR:Q9FF31"/>
<dbReference type="Proteomes" id="UP000006548">
    <property type="component" value="Chromosome 5"/>
</dbReference>
<dbReference type="ExpressionAtlas" id="Q9FF31">
    <property type="expression patterns" value="baseline and differential"/>
</dbReference>
<dbReference type="GO" id="GO:0016020">
    <property type="term" value="C:membrane"/>
    <property type="evidence" value="ECO:0007669"/>
    <property type="project" value="UniProtKB-SubCell"/>
</dbReference>
<dbReference type="GO" id="GO:0005524">
    <property type="term" value="F:ATP binding"/>
    <property type="evidence" value="ECO:0007669"/>
    <property type="project" value="UniProtKB-KW"/>
</dbReference>
<dbReference type="GO" id="GO:0030247">
    <property type="term" value="F:polysaccharide binding"/>
    <property type="evidence" value="ECO:0007669"/>
    <property type="project" value="InterPro"/>
</dbReference>
<dbReference type="GO" id="GO:0106310">
    <property type="term" value="F:protein serine kinase activity"/>
    <property type="evidence" value="ECO:0007669"/>
    <property type="project" value="RHEA"/>
</dbReference>
<dbReference type="GO" id="GO:0004674">
    <property type="term" value="F:protein serine/threonine kinase activity"/>
    <property type="evidence" value="ECO:0007669"/>
    <property type="project" value="UniProtKB-KW"/>
</dbReference>
<dbReference type="FunFam" id="1.10.510.10:FF:000590">
    <property type="entry name" value="PR5-like receptor kinase"/>
    <property type="match status" value="1"/>
</dbReference>
<dbReference type="FunFam" id="3.30.200.20:FF:000644">
    <property type="entry name" value="Suppressor of npr1-1 constitutive 4"/>
    <property type="match status" value="1"/>
</dbReference>
<dbReference type="Gene3D" id="3.30.200.20">
    <property type="entry name" value="Phosphorylase Kinase, domain 1"/>
    <property type="match status" value="1"/>
</dbReference>
<dbReference type="Gene3D" id="1.10.510.10">
    <property type="entry name" value="Transferase(Phosphotransferase) domain 1"/>
    <property type="match status" value="1"/>
</dbReference>
<dbReference type="InterPro" id="IPR011009">
    <property type="entry name" value="Kinase-like_dom_sf"/>
</dbReference>
<dbReference type="InterPro" id="IPR045874">
    <property type="entry name" value="LRK10/LRL21-25-like"/>
</dbReference>
<dbReference type="InterPro" id="IPR000719">
    <property type="entry name" value="Prot_kinase_dom"/>
</dbReference>
<dbReference type="InterPro" id="IPR017441">
    <property type="entry name" value="Protein_kinase_ATP_BS"/>
</dbReference>
<dbReference type="InterPro" id="IPR001245">
    <property type="entry name" value="Ser-Thr/Tyr_kinase_cat_dom"/>
</dbReference>
<dbReference type="InterPro" id="IPR008271">
    <property type="entry name" value="Ser/Thr_kinase_AS"/>
</dbReference>
<dbReference type="InterPro" id="IPR032872">
    <property type="entry name" value="WAK_assoc_C"/>
</dbReference>
<dbReference type="InterPro" id="IPR025287">
    <property type="entry name" value="WAK_GUB"/>
</dbReference>
<dbReference type="PANTHER" id="PTHR27009">
    <property type="entry name" value="RUST RESISTANCE KINASE LR10-RELATED"/>
    <property type="match status" value="1"/>
</dbReference>
<dbReference type="Pfam" id="PF13947">
    <property type="entry name" value="GUB_WAK_bind"/>
    <property type="match status" value="1"/>
</dbReference>
<dbReference type="Pfam" id="PF07714">
    <property type="entry name" value="PK_Tyr_Ser-Thr"/>
    <property type="match status" value="1"/>
</dbReference>
<dbReference type="Pfam" id="PF14380">
    <property type="entry name" value="WAK_assoc"/>
    <property type="match status" value="1"/>
</dbReference>
<dbReference type="SMART" id="SM00220">
    <property type="entry name" value="S_TKc"/>
    <property type="match status" value="1"/>
</dbReference>
<dbReference type="SUPFAM" id="SSF56112">
    <property type="entry name" value="Protein kinase-like (PK-like)"/>
    <property type="match status" value="1"/>
</dbReference>
<dbReference type="PROSITE" id="PS00107">
    <property type="entry name" value="PROTEIN_KINASE_ATP"/>
    <property type="match status" value="1"/>
</dbReference>
<dbReference type="PROSITE" id="PS50011">
    <property type="entry name" value="PROTEIN_KINASE_DOM"/>
    <property type="match status" value="1"/>
</dbReference>
<dbReference type="PROSITE" id="PS00108">
    <property type="entry name" value="PROTEIN_KINASE_ST"/>
    <property type="match status" value="1"/>
</dbReference>
<gene>
    <name evidence="5" type="primary">LRK10L-2.1</name>
    <name evidence="7" type="ordered locus">At5g38260</name>
    <name evidence="8" type="ORF">MXA21.5</name>
</gene>
<sequence length="638" mass="71411">MINLSLYQTNSLSYTIIWMLFVIPSCVLSVDERQKHCSPTFRCGKQTDLYYPFWSPDREECGHPVFKVNCSGDFAEFTISTVKFHVLEMNYESRIIRLVRTEYLNNLCPWHPENRSINQEVLPFLQDTELGTFYYNCSGPTVDELANGYIRQLGCDEEVGGKSYFVSSPSHPGNRAILDGLSASCERNVDIPVSRSAMETTATNQSLEAIKKVLDVGFELGFNSDCSLCVASKGACGFNQSSKAFVCYCKDEPHEHTCGKMGIGIGLGCGFLGATLITVCLLCFFFQKRRTSHHLRPRDNNLKGLVQLKQYSYAEVRKITKLFSHTLGKGGFGTVYGGNLCDGRKVAVKILKDFKSNGEDFINEVASMSQTSHVNIVSLLGFCYEGSKRAIVYEFLENGSLDQFLSEKKSLNLDVSTLYRIALGVARGLDYLHHGCKTRIVHFDIKPQNILLDDTFCPKVSDFGLAKLCEKRESILSLLDARGTIGYIAPEVFSGMYGRVSHKSDVYSYGMLVLEMIGAKNKEIEETAASNSSSAYFPDWIYKNLENGEDTWKFGDEISREDKEVAKKMTLVGLWCIQPSPLNRPPMNRIVEMMEGSLDVLEVPPKPSIHYSAEPLPQLSSFSEENSIYTEVFIGSTS</sequence>
<keyword id="KW-0067">ATP-binding</keyword>
<keyword id="KW-0325">Glycoprotein</keyword>
<keyword id="KW-0418">Kinase</keyword>
<keyword id="KW-0472">Membrane</keyword>
<keyword id="KW-0547">Nucleotide-binding</keyword>
<keyword id="KW-0597">Phosphoprotein</keyword>
<keyword id="KW-0675">Receptor</keyword>
<keyword id="KW-1185">Reference proteome</keyword>
<keyword id="KW-0723">Serine/threonine-protein kinase</keyword>
<keyword id="KW-0732">Signal</keyword>
<keyword id="KW-0808">Transferase</keyword>
<keyword id="KW-0812">Transmembrane</keyword>
<keyword id="KW-1133">Transmembrane helix</keyword>
<feature type="signal peptide" evidence="2">
    <location>
        <begin position="1"/>
        <end position="29"/>
    </location>
</feature>
<feature type="chain" id="PRO_5005942896" description="LEAF RUST 10 DISEASE-RESISTANCE LOCUS RECEPTOR-LIKE PROTEIN KINASE-like 2.1">
    <location>
        <begin position="30"/>
        <end position="638"/>
    </location>
</feature>
<feature type="topological domain" description="Extracellular" evidence="6">
    <location>
        <begin position="30"/>
        <end position="264"/>
    </location>
</feature>
<feature type="transmembrane region" description="Helical" evidence="2">
    <location>
        <begin position="265"/>
        <end position="285"/>
    </location>
</feature>
<feature type="topological domain" description="Cytoplasmic" evidence="6">
    <location>
        <begin position="286"/>
        <end position="638"/>
    </location>
</feature>
<feature type="domain" description="Protein kinase" evidence="3">
    <location>
        <begin position="321"/>
        <end position="609"/>
    </location>
</feature>
<feature type="active site" description="Proton acceptor" evidence="3">
    <location>
        <position position="444"/>
    </location>
</feature>
<feature type="binding site" evidence="3">
    <location>
        <begin position="327"/>
        <end position="335"/>
    </location>
    <ligand>
        <name>ATP</name>
        <dbReference type="ChEBI" id="CHEBI:30616"/>
    </ligand>
</feature>
<feature type="binding site" evidence="3">
    <location>
        <position position="349"/>
    </location>
    <ligand>
        <name>ATP</name>
        <dbReference type="ChEBI" id="CHEBI:30616"/>
    </ligand>
</feature>
<feature type="modified residue" description="Phosphotyrosine" evidence="1">
    <location>
        <position position="393"/>
    </location>
</feature>
<feature type="modified residue" description="Phosphothreonine" evidence="1">
    <location>
        <position position="484"/>
    </location>
</feature>
<feature type="glycosylation site" description="N-linked (GlcNAc...) asparagine" evidence="4">
    <location>
        <position position="69"/>
    </location>
</feature>
<feature type="glycosylation site" description="N-linked (GlcNAc...) asparagine" evidence="4">
    <location>
        <position position="114"/>
    </location>
</feature>
<feature type="glycosylation site" description="N-linked (GlcNAc...) asparagine" evidence="4">
    <location>
        <position position="136"/>
    </location>
</feature>
<feature type="glycosylation site" description="N-linked (GlcNAc...) asparagine" evidence="4">
    <location>
        <position position="204"/>
    </location>
</feature>
<feature type="glycosylation site" description="N-linked (GlcNAc...) asparagine" evidence="4">
    <location>
        <position position="239"/>
    </location>
</feature>
<reference key="1">
    <citation type="journal article" date="1997" name="DNA Res.">
        <title>Structural analysis of Arabidopsis thaliana chromosome 5. I. Sequence features of the 1.6 Mb regions covered by twenty physically assigned P1 clones.</title>
        <authorList>
            <person name="Sato S."/>
            <person name="Kotani H."/>
            <person name="Nakamura Y."/>
            <person name="Kaneko T."/>
            <person name="Asamizu E."/>
            <person name="Fukami M."/>
            <person name="Miyajima N."/>
            <person name="Tabata S."/>
        </authorList>
    </citation>
    <scope>NUCLEOTIDE SEQUENCE [LARGE SCALE GENOMIC DNA]</scope>
    <source>
        <strain>cv. Columbia</strain>
    </source>
</reference>
<reference key="2">
    <citation type="journal article" date="2017" name="Plant J.">
        <title>Araport11: a complete reannotation of the Arabidopsis thaliana reference genome.</title>
        <authorList>
            <person name="Cheng C.Y."/>
            <person name="Krishnakumar V."/>
            <person name="Chan A.P."/>
            <person name="Thibaud-Nissen F."/>
            <person name="Schobel S."/>
            <person name="Town C.D."/>
        </authorList>
    </citation>
    <scope>GENOME REANNOTATION</scope>
    <source>
        <strain>cv. Columbia</strain>
    </source>
</reference>
<reference key="3">
    <citation type="journal article" date="2001" name="Proc. Natl. Acad. Sci. U.S.A.">
        <title>Receptor-like kinases from Arabidopsis form a monophyletic gene family related to animal receptor kinases.</title>
        <authorList>
            <person name="Shiu S.H."/>
            <person name="Bleecker A.B."/>
        </authorList>
    </citation>
    <scope>GENE FAMILY</scope>
</reference>
<reference key="4">
    <citation type="journal article" date="2003" name="Plant Physiol.">
        <title>Expansion of the receptor-like kinase/Pelle gene family and receptor-like proteins in Arabidopsis.</title>
        <authorList>
            <person name="Shiu S.H."/>
            <person name="Bleecker A.B."/>
        </authorList>
    </citation>
    <scope>GENE FAMILY</scope>
</reference>
<evidence type="ECO:0000250" key="1">
    <source>
        <dbReference type="UniProtKB" id="O48814"/>
    </source>
</evidence>
<evidence type="ECO:0000255" key="2"/>
<evidence type="ECO:0000255" key="3">
    <source>
        <dbReference type="PROSITE-ProRule" id="PRU00159"/>
    </source>
</evidence>
<evidence type="ECO:0000255" key="4">
    <source>
        <dbReference type="PROSITE-ProRule" id="PRU00498"/>
    </source>
</evidence>
<evidence type="ECO:0000303" key="5">
    <source>
    </source>
</evidence>
<evidence type="ECO:0000305" key="6"/>
<evidence type="ECO:0000312" key="7">
    <source>
        <dbReference type="Araport" id="AT5G38260"/>
    </source>
</evidence>
<evidence type="ECO:0000312" key="8">
    <source>
        <dbReference type="EMBL" id="BAB11292.1"/>
    </source>
</evidence>
<name>LRL21_ARATH</name>
<organism>
    <name type="scientific">Arabidopsis thaliana</name>
    <name type="common">Mouse-ear cress</name>
    <dbReference type="NCBI Taxonomy" id="3702"/>
    <lineage>
        <taxon>Eukaryota</taxon>
        <taxon>Viridiplantae</taxon>
        <taxon>Streptophyta</taxon>
        <taxon>Embryophyta</taxon>
        <taxon>Tracheophyta</taxon>
        <taxon>Spermatophyta</taxon>
        <taxon>Magnoliopsida</taxon>
        <taxon>eudicotyledons</taxon>
        <taxon>Gunneridae</taxon>
        <taxon>Pentapetalae</taxon>
        <taxon>rosids</taxon>
        <taxon>malvids</taxon>
        <taxon>Brassicales</taxon>
        <taxon>Brassicaceae</taxon>
        <taxon>Camelineae</taxon>
        <taxon>Arabidopsis</taxon>
    </lineage>
</organism>